<name>ALR_THIDA</name>
<gene>
    <name type="primary">alr</name>
    <name type="ordered locus">Tbd_2100</name>
</gene>
<feature type="chain" id="PRO_1000066058" description="Alanine racemase">
    <location>
        <begin position="1"/>
        <end position="367"/>
    </location>
</feature>
<feature type="active site" description="Proton acceptor; specific for D-alanine" evidence="1">
    <location>
        <position position="34"/>
    </location>
</feature>
<feature type="active site" description="Proton acceptor; specific for L-alanine" evidence="1">
    <location>
        <position position="251"/>
    </location>
</feature>
<feature type="binding site" evidence="1">
    <location>
        <position position="129"/>
    </location>
    <ligand>
        <name>substrate</name>
    </ligand>
</feature>
<feature type="binding site" evidence="1">
    <location>
        <position position="299"/>
    </location>
    <ligand>
        <name>substrate</name>
    </ligand>
</feature>
<feature type="modified residue" description="N6-(pyridoxal phosphate)lysine" evidence="1">
    <location>
        <position position="34"/>
    </location>
</feature>
<proteinExistence type="inferred from homology"/>
<accession>Q3SH36</accession>
<dbReference type="EC" id="5.1.1.1" evidence="1"/>
<dbReference type="EMBL" id="CP000116">
    <property type="protein sequence ID" value="AAZ98053.1"/>
    <property type="molecule type" value="Genomic_DNA"/>
</dbReference>
<dbReference type="RefSeq" id="WP_011312612.1">
    <property type="nucleotide sequence ID" value="NC_007404.1"/>
</dbReference>
<dbReference type="SMR" id="Q3SH36"/>
<dbReference type="STRING" id="292415.Tbd_2100"/>
<dbReference type="KEGG" id="tbd:Tbd_2100"/>
<dbReference type="eggNOG" id="COG0787">
    <property type="taxonomic scope" value="Bacteria"/>
</dbReference>
<dbReference type="HOGENOM" id="CLU_028393_1_0_4"/>
<dbReference type="OrthoDB" id="9813814at2"/>
<dbReference type="UniPathway" id="UPA00042">
    <property type="reaction ID" value="UER00497"/>
</dbReference>
<dbReference type="Proteomes" id="UP000008291">
    <property type="component" value="Chromosome"/>
</dbReference>
<dbReference type="GO" id="GO:0005829">
    <property type="term" value="C:cytosol"/>
    <property type="evidence" value="ECO:0007669"/>
    <property type="project" value="TreeGrafter"/>
</dbReference>
<dbReference type="GO" id="GO:0008784">
    <property type="term" value="F:alanine racemase activity"/>
    <property type="evidence" value="ECO:0007669"/>
    <property type="project" value="UniProtKB-UniRule"/>
</dbReference>
<dbReference type="GO" id="GO:0030170">
    <property type="term" value="F:pyridoxal phosphate binding"/>
    <property type="evidence" value="ECO:0007669"/>
    <property type="project" value="UniProtKB-UniRule"/>
</dbReference>
<dbReference type="GO" id="GO:0030632">
    <property type="term" value="P:D-alanine biosynthetic process"/>
    <property type="evidence" value="ECO:0007669"/>
    <property type="project" value="UniProtKB-UniRule"/>
</dbReference>
<dbReference type="CDD" id="cd06827">
    <property type="entry name" value="PLPDE_III_AR_proteobact"/>
    <property type="match status" value="1"/>
</dbReference>
<dbReference type="FunFam" id="2.40.37.10:FF:000002">
    <property type="entry name" value="Alanine racemase"/>
    <property type="match status" value="1"/>
</dbReference>
<dbReference type="FunFam" id="3.20.20.10:FF:000002">
    <property type="entry name" value="Alanine racemase"/>
    <property type="match status" value="1"/>
</dbReference>
<dbReference type="Gene3D" id="3.20.20.10">
    <property type="entry name" value="Alanine racemase"/>
    <property type="match status" value="1"/>
</dbReference>
<dbReference type="Gene3D" id="2.40.37.10">
    <property type="entry name" value="Lyase, Ornithine Decarboxylase, Chain A, domain 1"/>
    <property type="match status" value="1"/>
</dbReference>
<dbReference type="HAMAP" id="MF_01201">
    <property type="entry name" value="Ala_racemase"/>
    <property type="match status" value="1"/>
</dbReference>
<dbReference type="InterPro" id="IPR000821">
    <property type="entry name" value="Ala_racemase"/>
</dbReference>
<dbReference type="InterPro" id="IPR009006">
    <property type="entry name" value="Ala_racemase/Decarboxylase_C"/>
</dbReference>
<dbReference type="InterPro" id="IPR011079">
    <property type="entry name" value="Ala_racemase_C"/>
</dbReference>
<dbReference type="InterPro" id="IPR001608">
    <property type="entry name" value="Ala_racemase_N"/>
</dbReference>
<dbReference type="InterPro" id="IPR020622">
    <property type="entry name" value="Ala_racemase_pyridoxalP-BS"/>
</dbReference>
<dbReference type="InterPro" id="IPR029066">
    <property type="entry name" value="PLP-binding_barrel"/>
</dbReference>
<dbReference type="NCBIfam" id="TIGR00492">
    <property type="entry name" value="alr"/>
    <property type="match status" value="1"/>
</dbReference>
<dbReference type="PANTHER" id="PTHR30511">
    <property type="entry name" value="ALANINE RACEMASE"/>
    <property type="match status" value="1"/>
</dbReference>
<dbReference type="PANTHER" id="PTHR30511:SF0">
    <property type="entry name" value="ALANINE RACEMASE, CATABOLIC-RELATED"/>
    <property type="match status" value="1"/>
</dbReference>
<dbReference type="Pfam" id="PF00842">
    <property type="entry name" value="Ala_racemase_C"/>
    <property type="match status" value="1"/>
</dbReference>
<dbReference type="Pfam" id="PF01168">
    <property type="entry name" value="Ala_racemase_N"/>
    <property type="match status" value="1"/>
</dbReference>
<dbReference type="PRINTS" id="PR00992">
    <property type="entry name" value="ALARACEMASE"/>
</dbReference>
<dbReference type="SMART" id="SM01005">
    <property type="entry name" value="Ala_racemase_C"/>
    <property type="match status" value="1"/>
</dbReference>
<dbReference type="SUPFAM" id="SSF50621">
    <property type="entry name" value="Alanine racemase C-terminal domain-like"/>
    <property type="match status" value="1"/>
</dbReference>
<dbReference type="SUPFAM" id="SSF51419">
    <property type="entry name" value="PLP-binding barrel"/>
    <property type="match status" value="1"/>
</dbReference>
<dbReference type="PROSITE" id="PS00395">
    <property type="entry name" value="ALANINE_RACEMASE"/>
    <property type="match status" value="1"/>
</dbReference>
<sequence>MRPIKASISADAMAHNLRVARRHAGAARVFAVVKANAYGHGLSRALRAFGAADGFAVLTLEEAASLRQMGVDKPILLLEGIFDAGEIAACAELDLWPVLHHARQLDWLEQQRPARALEVFLKFDSGMHRLGFPLAEHAEVVARVRALAGVARVTLMTHFAQADDSAGVAWQLQPFREALDGHGLPWSSANSAALMRYPETVGDWVRPGIMLYGASPFTDVPASGLGLEPAMTLRSEIIAVQTLAAGEGIGYGQTFRADKPMRAGVVACGYADGYPRHAPTGTPVVVDGRRTRTLGRVSMDMLCVDLSECPAAGVGSAVVLWGDGLPVDDVAAAAGTSSYELLCALAPRVPIEEVGRNQEAGRGFGNE</sequence>
<comment type="function">
    <text evidence="1">Catalyzes the interconversion of L-alanine and D-alanine. May also act on other amino acids.</text>
</comment>
<comment type="catalytic activity">
    <reaction evidence="1">
        <text>L-alanine = D-alanine</text>
        <dbReference type="Rhea" id="RHEA:20249"/>
        <dbReference type="ChEBI" id="CHEBI:57416"/>
        <dbReference type="ChEBI" id="CHEBI:57972"/>
        <dbReference type="EC" id="5.1.1.1"/>
    </reaction>
</comment>
<comment type="cofactor">
    <cofactor evidence="1">
        <name>pyridoxal 5'-phosphate</name>
        <dbReference type="ChEBI" id="CHEBI:597326"/>
    </cofactor>
</comment>
<comment type="pathway">
    <text evidence="1">Amino-acid biosynthesis; D-alanine biosynthesis; D-alanine from L-alanine: step 1/1.</text>
</comment>
<comment type="similarity">
    <text evidence="1">Belongs to the alanine racemase family.</text>
</comment>
<protein>
    <recommendedName>
        <fullName evidence="1">Alanine racemase</fullName>
        <ecNumber evidence="1">5.1.1.1</ecNumber>
    </recommendedName>
</protein>
<keyword id="KW-0413">Isomerase</keyword>
<keyword id="KW-0663">Pyridoxal phosphate</keyword>
<keyword id="KW-1185">Reference proteome</keyword>
<organism>
    <name type="scientific">Thiobacillus denitrificans (strain ATCC 25259 / T1)</name>
    <dbReference type="NCBI Taxonomy" id="292415"/>
    <lineage>
        <taxon>Bacteria</taxon>
        <taxon>Pseudomonadati</taxon>
        <taxon>Pseudomonadota</taxon>
        <taxon>Betaproteobacteria</taxon>
        <taxon>Nitrosomonadales</taxon>
        <taxon>Thiobacillaceae</taxon>
        <taxon>Thiobacillus</taxon>
    </lineage>
</organism>
<reference key="1">
    <citation type="journal article" date="2006" name="J. Bacteriol.">
        <title>The genome sequence of the obligately chemolithoautotrophic, facultatively anaerobic bacterium Thiobacillus denitrificans.</title>
        <authorList>
            <person name="Beller H.R."/>
            <person name="Chain P.S."/>
            <person name="Letain T.E."/>
            <person name="Chakicherla A."/>
            <person name="Larimer F.W."/>
            <person name="Richardson P.M."/>
            <person name="Coleman M.A."/>
            <person name="Wood A.P."/>
            <person name="Kelly D.P."/>
        </authorList>
    </citation>
    <scope>NUCLEOTIDE SEQUENCE [LARGE SCALE GENOMIC DNA]</scope>
    <source>
        <strain>ATCC 25259 / T1</strain>
    </source>
</reference>
<evidence type="ECO:0000255" key="1">
    <source>
        <dbReference type="HAMAP-Rule" id="MF_01201"/>
    </source>
</evidence>